<feature type="chain" id="PRO_1000191992" description="Aspartate 1-decarboxylase beta chain" evidence="1">
    <location>
        <begin position="1"/>
        <end position="24"/>
    </location>
</feature>
<feature type="chain" id="PRO_1000124816" description="Aspartate 1-decarboxylase alpha chain" evidence="1">
    <location>
        <begin position="25"/>
        <end position="126"/>
    </location>
</feature>
<feature type="active site" description="Schiff-base intermediate with substrate; via pyruvic acid" evidence="1">
    <location>
        <position position="25"/>
    </location>
</feature>
<feature type="active site" description="Proton donor" evidence="1">
    <location>
        <position position="58"/>
    </location>
</feature>
<feature type="binding site" evidence="1">
    <location>
        <position position="57"/>
    </location>
    <ligand>
        <name>substrate</name>
    </ligand>
</feature>
<feature type="binding site" evidence="1">
    <location>
        <begin position="73"/>
        <end position="75"/>
    </location>
    <ligand>
        <name>substrate</name>
    </ligand>
</feature>
<feature type="modified residue" description="Pyruvic acid (Ser)" evidence="1">
    <location>
        <position position="25"/>
    </location>
</feature>
<gene>
    <name evidence="1" type="primary">panD</name>
    <name type="ordered locus">EcSMS35_0141</name>
</gene>
<dbReference type="EC" id="4.1.1.11" evidence="1"/>
<dbReference type="EMBL" id="CP000970">
    <property type="protein sequence ID" value="ACB19700.1"/>
    <property type="molecule type" value="Genomic_DNA"/>
</dbReference>
<dbReference type="RefSeq" id="WP_000621515.1">
    <property type="nucleotide sequence ID" value="NC_010498.1"/>
</dbReference>
<dbReference type="SMR" id="B1LGT2"/>
<dbReference type="GeneID" id="93777305"/>
<dbReference type="KEGG" id="ecm:EcSMS35_0141"/>
<dbReference type="HOGENOM" id="CLU_115305_2_1_6"/>
<dbReference type="UniPathway" id="UPA00028">
    <property type="reaction ID" value="UER00002"/>
</dbReference>
<dbReference type="Proteomes" id="UP000007011">
    <property type="component" value="Chromosome"/>
</dbReference>
<dbReference type="GO" id="GO:0005829">
    <property type="term" value="C:cytosol"/>
    <property type="evidence" value="ECO:0007669"/>
    <property type="project" value="TreeGrafter"/>
</dbReference>
<dbReference type="GO" id="GO:0004068">
    <property type="term" value="F:aspartate 1-decarboxylase activity"/>
    <property type="evidence" value="ECO:0007669"/>
    <property type="project" value="UniProtKB-UniRule"/>
</dbReference>
<dbReference type="GO" id="GO:0006523">
    <property type="term" value="P:alanine biosynthetic process"/>
    <property type="evidence" value="ECO:0007669"/>
    <property type="project" value="InterPro"/>
</dbReference>
<dbReference type="GO" id="GO:0015940">
    <property type="term" value="P:pantothenate biosynthetic process"/>
    <property type="evidence" value="ECO:0007669"/>
    <property type="project" value="UniProtKB-UniRule"/>
</dbReference>
<dbReference type="CDD" id="cd06919">
    <property type="entry name" value="Asp_decarbox"/>
    <property type="match status" value="1"/>
</dbReference>
<dbReference type="FunFam" id="2.40.40.20:FF:000004">
    <property type="entry name" value="Aspartate 1-decarboxylase"/>
    <property type="match status" value="1"/>
</dbReference>
<dbReference type="Gene3D" id="2.40.40.20">
    <property type="match status" value="1"/>
</dbReference>
<dbReference type="HAMAP" id="MF_00446">
    <property type="entry name" value="PanD"/>
    <property type="match status" value="1"/>
</dbReference>
<dbReference type="InterPro" id="IPR009010">
    <property type="entry name" value="Asp_de-COase-like_dom_sf"/>
</dbReference>
<dbReference type="InterPro" id="IPR003190">
    <property type="entry name" value="Asp_decarbox"/>
</dbReference>
<dbReference type="NCBIfam" id="TIGR00223">
    <property type="entry name" value="panD"/>
    <property type="match status" value="1"/>
</dbReference>
<dbReference type="PANTHER" id="PTHR21012">
    <property type="entry name" value="ASPARTATE 1-DECARBOXYLASE"/>
    <property type="match status" value="1"/>
</dbReference>
<dbReference type="PANTHER" id="PTHR21012:SF0">
    <property type="entry name" value="ASPARTATE 1-DECARBOXYLASE"/>
    <property type="match status" value="1"/>
</dbReference>
<dbReference type="Pfam" id="PF02261">
    <property type="entry name" value="Asp_decarbox"/>
    <property type="match status" value="1"/>
</dbReference>
<dbReference type="PIRSF" id="PIRSF006246">
    <property type="entry name" value="Asp_decarbox"/>
    <property type="match status" value="1"/>
</dbReference>
<dbReference type="SUPFAM" id="SSF50692">
    <property type="entry name" value="ADC-like"/>
    <property type="match status" value="1"/>
</dbReference>
<sequence length="126" mass="13834">MIRTMLQGKLHRVKVTHADLHYEGSCAIDQDFLDAAGILENEAIDIWNVTNGKRFSTYAIAAERGSRIISVNGAAAHCASVGDIVIIASFVTMPDEEARTWRPNVAYFEGDNEMKRTAKAIPVQVA</sequence>
<reference key="1">
    <citation type="journal article" date="2008" name="J. Bacteriol.">
        <title>Insights into the environmental resistance gene pool from the genome sequence of the multidrug-resistant environmental isolate Escherichia coli SMS-3-5.</title>
        <authorList>
            <person name="Fricke W.F."/>
            <person name="Wright M.S."/>
            <person name="Lindell A.H."/>
            <person name="Harkins D.M."/>
            <person name="Baker-Austin C."/>
            <person name="Ravel J."/>
            <person name="Stepanauskas R."/>
        </authorList>
    </citation>
    <scope>NUCLEOTIDE SEQUENCE [LARGE SCALE GENOMIC DNA]</scope>
    <source>
        <strain>SMS-3-5 / SECEC</strain>
    </source>
</reference>
<keyword id="KW-0068">Autocatalytic cleavage</keyword>
<keyword id="KW-0963">Cytoplasm</keyword>
<keyword id="KW-0210">Decarboxylase</keyword>
<keyword id="KW-0456">Lyase</keyword>
<keyword id="KW-0566">Pantothenate biosynthesis</keyword>
<keyword id="KW-0670">Pyruvate</keyword>
<keyword id="KW-0704">Schiff base</keyword>
<keyword id="KW-0865">Zymogen</keyword>
<proteinExistence type="inferred from homology"/>
<evidence type="ECO:0000255" key="1">
    <source>
        <dbReference type="HAMAP-Rule" id="MF_00446"/>
    </source>
</evidence>
<organism>
    <name type="scientific">Escherichia coli (strain SMS-3-5 / SECEC)</name>
    <dbReference type="NCBI Taxonomy" id="439855"/>
    <lineage>
        <taxon>Bacteria</taxon>
        <taxon>Pseudomonadati</taxon>
        <taxon>Pseudomonadota</taxon>
        <taxon>Gammaproteobacteria</taxon>
        <taxon>Enterobacterales</taxon>
        <taxon>Enterobacteriaceae</taxon>
        <taxon>Escherichia</taxon>
    </lineage>
</organism>
<comment type="function">
    <text evidence="1">Catalyzes the pyruvoyl-dependent decarboxylation of aspartate to produce beta-alanine.</text>
</comment>
<comment type="catalytic activity">
    <reaction evidence="1">
        <text>L-aspartate + H(+) = beta-alanine + CO2</text>
        <dbReference type="Rhea" id="RHEA:19497"/>
        <dbReference type="ChEBI" id="CHEBI:15378"/>
        <dbReference type="ChEBI" id="CHEBI:16526"/>
        <dbReference type="ChEBI" id="CHEBI:29991"/>
        <dbReference type="ChEBI" id="CHEBI:57966"/>
        <dbReference type="EC" id="4.1.1.11"/>
    </reaction>
</comment>
<comment type="cofactor">
    <cofactor evidence="1">
        <name>pyruvate</name>
        <dbReference type="ChEBI" id="CHEBI:15361"/>
    </cofactor>
    <text evidence="1">Binds 1 pyruvoyl group covalently per subunit.</text>
</comment>
<comment type="pathway">
    <text evidence="1">Cofactor biosynthesis; (R)-pantothenate biosynthesis; beta-alanine from L-aspartate: step 1/1.</text>
</comment>
<comment type="subunit">
    <text evidence="1">Heterooctamer of four alpha and four beta subunits.</text>
</comment>
<comment type="subcellular location">
    <subcellularLocation>
        <location evidence="1">Cytoplasm</location>
    </subcellularLocation>
</comment>
<comment type="PTM">
    <text evidence="1">Is synthesized initially as an inactive proenzyme, which is activated by self-cleavage at a specific serine bond to produce a beta-subunit with a hydroxyl group at its C-terminus and an alpha-subunit with a pyruvoyl group at its N-terminus.</text>
</comment>
<comment type="similarity">
    <text evidence="1">Belongs to the PanD family.</text>
</comment>
<name>PAND_ECOSM</name>
<accession>B1LGT2</accession>
<protein>
    <recommendedName>
        <fullName evidence="1">Aspartate 1-decarboxylase</fullName>
        <ecNumber evidence="1">4.1.1.11</ecNumber>
    </recommendedName>
    <alternativeName>
        <fullName evidence="1">Aspartate alpha-decarboxylase</fullName>
    </alternativeName>
    <component>
        <recommendedName>
            <fullName evidence="1">Aspartate 1-decarboxylase beta chain</fullName>
        </recommendedName>
    </component>
    <component>
        <recommendedName>
            <fullName evidence="1">Aspartate 1-decarboxylase alpha chain</fullName>
        </recommendedName>
    </component>
</protein>